<comment type="similarity">
    <text evidence="1">Belongs to the UPF0358 family.</text>
</comment>
<sequence length="95" mass="10740">MASETVSNHQEKALALLQADAEKILRLIKVQMDHLTMPQCPLYEEVLDTQMFGLSREVDFAVRLGLIAEEQGKAMLGELERELSALHEAFTNKQQ</sequence>
<feature type="chain" id="PRO_0000110638" description="UPF0358 protein BCE33L3709">
    <location>
        <begin position="1"/>
        <end position="95"/>
    </location>
</feature>
<organism>
    <name type="scientific">Bacillus cereus (strain ZK / E33L)</name>
    <dbReference type="NCBI Taxonomy" id="288681"/>
    <lineage>
        <taxon>Bacteria</taxon>
        <taxon>Bacillati</taxon>
        <taxon>Bacillota</taxon>
        <taxon>Bacilli</taxon>
        <taxon>Bacillales</taxon>
        <taxon>Bacillaceae</taxon>
        <taxon>Bacillus</taxon>
        <taxon>Bacillus cereus group</taxon>
    </lineage>
</organism>
<name>Y3709_BACCZ</name>
<gene>
    <name type="ordered locus">BCE33L3709</name>
</gene>
<evidence type="ECO:0000255" key="1">
    <source>
        <dbReference type="HAMAP-Rule" id="MF_01560"/>
    </source>
</evidence>
<proteinExistence type="inferred from homology"/>
<accession>Q635X7</accession>
<protein>
    <recommendedName>
        <fullName evidence="1">UPF0358 protein BCE33L3709</fullName>
    </recommendedName>
</protein>
<dbReference type="EMBL" id="CP000001">
    <property type="protein sequence ID" value="AAU16557.1"/>
    <property type="molecule type" value="Genomic_DNA"/>
</dbReference>
<dbReference type="RefSeq" id="WP_000135695.1">
    <property type="nucleotide sequence ID" value="NZ_CP009968.1"/>
</dbReference>
<dbReference type="SMR" id="Q635X7"/>
<dbReference type="KEGG" id="bcz:BCE33L3709"/>
<dbReference type="PATRIC" id="fig|288681.22.peg.1703"/>
<dbReference type="Proteomes" id="UP000002612">
    <property type="component" value="Chromosome"/>
</dbReference>
<dbReference type="Gene3D" id="1.10.287.750">
    <property type="entry name" value="SO2669-like"/>
    <property type="match status" value="1"/>
</dbReference>
<dbReference type="HAMAP" id="MF_01560">
    <property type="entry name" value="UPF0358"/>
    <property type="match status" value="1"/>
</dbReference>
<dbReference type="InterPro" id="IPR009983">
    <property type="entry name" value="UPF0358"/>
</dbReference>
<dbReference type="InterPro" id="IPR036270">
    <property type="entry name" value="UPF0358_sf"/>
</dbReference>
<dbReference type="NCBIfam" id="NF010187">
    <property type="entry name" value="PRK13666.1"/>
    <property type="match status" value="1"/>
</dbReference>
<dbReference type="Pfam" id="PF07408">
    <property type="entry name" value="DUF1507"/>
    <property type="match status" value="1"/>
</dbReference>
<dbReference type="SUPFAM" id="SSF140404">
    <property type="entry name" value="EF2458-like"/>
    <property type="match status" value="1"/>
</dbReference>
<reference key="1">
    <citation type="journal article" date="2006" name="J. Bacteriol.">
        <title>Pathogenomic sequence analysis of Bacillus cereus and Bacillus thuringiensis isolates closely related to Bacillus anthracis.</title>
        <authorList>
            <person name="Han C.S."/>
            <person name="Xie G."/>
            <person name="Challacombe J.F."/>
            <person name="Altherr M.R."/>
            <person name="Bhotika S.S."/>
            <person name="Bruce D."/>
            <person name="Campbell C.S."/>
            <person name="Campbell M.L."/>
            <person name="Chen J."/>
            <person name="Chertkov O."/>
            <person name="Cleland C."/>
            <person name="Dimitrijevic M."/>
            <person name="Doggett N.A."/>
            <person name="Fawcett J.J."/>
            <person name="Glavina T."/>
            <person name="Goodwin L.A."/>
            <person name="Hill K.K."/>
            <person name="Hitchcock P."/>
            <person name="Jackson P.J."/>
            <person name="Keim P."/>
            <person name="Kewalramani A.R."/>
            <person name="Longmire J."/>
            <person name="Lucas S."/>
            <person name="Malfatti S."/>
            <person name="McMurry K."/>
            <person name="Meincke L.J."/>
            <person name="Misra M."/>
            <person name="Moseman B.L."/>
            <person name="Mundt M."/>
            <person name="Munk A.C."/>
            <person name="Okinaka R.T."/>
            <person name="Parson-Quintana B."/>
            <person name="Reilly L.P."/>
            <person name="Richardson P."/>
            <person name="Robinson D.L."/>
            <person name="Rubin E."/>
            <person name="Saunders E."/>
            <person name="Tapia R."/>
            <person name="Tesmer J.G."/>
            <person name="Thayer N."/>
            <person name="Thompson L.S."/>
            <person name="Tice H."/>
            <person name="Ticknor L.O."/>
            <person name="Wills P.L."/>
            <person name="Brettin T.S."/>
            <person name="Gilna P."/>
        </authorList>
    </citation>
    <scope>NUCLEOTIDE SEQUENCE [LARGE SCALE GENOMIC DNA]</scope>
    <source>
        <strain>ZK / E33L</strain>
    </source>
</reference>